<sequence length="487" mass="52597">MQFAFDNSFHADMQGFYAPAEAAKPSAPRLLAFNDALAERLGFDRRGVDADELARVFSGEELPEGAAPIALAYAGHQFGHFSPQLGDGRALLLGEIVAPDGARFDIQLKGSGPTAFSRGGDGKAAIGPVLREFLVSEAMAAMGVPTTRALAAVTTGERVERERAHPGAVLTRVASSHIRVGTFQFFAAHFGADHVVQLSDYSIARHFPDLADAANPHLALLDRVIGLQCALIARWLGVGFIHGVMNTDNVAISGETIDYGPCAFMDRFAANTVFSSIDATGRYAYGRQPQIMHWNMARFAEALLPAIHRVSPADVEAAKALVDAIPGRFRAAWHAQVREKLGLSTSAGDDAELIDRLFDELEKHSVDFTTFFRALAMLLRGEGAMMQALLPAPDAMAPWIADWWQRIEQDAANPLDLADAMDAVNPLYIPRNHRVEAALEAAEAGDPAPWLELLEVVRQPFAARAGRERFAEPAPADAAPYTTFCGT</sequence>
<proteinExistence type="inferred from homology"/>
<keyword id="KW-0067">ATP-binding</keyword>
<keyword id="KW-0460">Magnesium</keyword>
<keyword id="KW-0464">Manganese</keyword>
<keyword id="KW-0479">Metal-binding</keyword>
<keyword id="KW-0547">Nucleotide-binding</keyword>
<keyword id="KW-0548">Nucleotidyltransferase</keyword>
<keyword id="KW-1185">Reference proteome</keyword>
<keyword id="KW-0808">Transferase</keyword>
<comment type="function">
    <text evidence="1">Nucleotidyltransferase involved in the post-translational modification of proteins. It can catalyze the addition of adenosine monophosphate (AMP) or uridine monophosphate (UMP) to a protein, resulting in modifications known as AMPylation and UMPylation.</text>
</comment>
<comment type="catalytic activity">
    <reaction evidence="1">
        <text>L-seryl-[protein] + ATP = 3-O-(5'-adenylyl)-L-seryl-[protein] + diphosphate</text>
        <dbReference type="Rhea" id="RHEA:58120"/>
        <dbReference type="Rhea" id="RHEA-COMP:9863"/>
        <dbReference type="Rhea" id="RHEA-COMP:15073"/>
        <dbReference type="ChEBI" id="CHEBI:29999"/>
        <dbReference type="ChEBI" id="CHEBI:30616"/>
        <dbReference type="ChEBI" id="CHEBI:33019"/>
        <dbReference type="ChEBI" id="CHEBI:142516"/>
        <dbReference type="EC" id="2.7.7.108"/>
    </reaction>
</comment>
<comment type="catalytic activity">
    <reaction evidence="1">
        <text>L-threonyl-[protein] + ATP = 3-O-(5'-adenylyl)-L-threonyl-[protein] + diphosphate</text>
        <dbReference type="Rhea" id="RHEA:54292"/>
        <dbReference type="Rhea" id="RHEA-COMP:11060"/>
        <dbReference type="Rhea" id="RHEA-COMP:13847"/>
        <dbReference type="ChEBI" id="CHEBI:30013"/>
        <dbReference type="ChEBI" id="CHEBI:30616"/>
        <dbReference type="ChEBI" id="CHEBI:33019"/>
        <dbReference type="ChEBI" id="CHEBI:138113"/>
        <dbReference type="EC" id="2.7.7.108"/>
    </reaction>
</comment>
<comment type="catalytic activity">
    <reaction evidence="1">
        <text>L-tyrosyl-[protein] + ATP = O-(5'-adenylyl)-L-tyrosyl-[protein] + diphosphate</text>
        <dbReference type="Rhea" id="RHEA:54288"/>
        <dbReference type="Rhea" id="RHEA-COMP:10136"/>
        <dbReference type="Rhea" id="RHEA-COMP:13846"/>
        <dbReference type="ChEBI" id="CHEBI:30616"/>
        <dbReference type="ChEBI" id="CHEBI:33019"/>
        <dbReference type="ChEBI" id="CHEBI:46858"/>
        <dbReference type="ChEBI" id="CHEBI:83624"/>
        <dbReference type="EC" id="2.7.7.108"/>
    </reaction>
</comment>
<comment type="catalytic activity">
    <reaction evidence="1">
        <text>L-histidyl-[protein] + UTP = N(tele)-(5'-uridylyl)-L-histidyl-[protein] + diphosphate</text>
        <dbReference type="Rhea" id="RHEA:83891"/>
        <dbReference type="Rhea" id="RHEA-COMP:9745"/>
        <dbReference type="Rhea" id="RHEA-COMP:20239"/>
        <dbReference type="ChEBI" id="CHEBI:29979"/>
        <dbReference type="ChEBI" id="CHEBI:33019"/>
        <dbReference type="ChEBI" id="CHEBI:46398"/>
        <dbReference type="ChEBI" id="CHEBI:233474"/>
    </reaction>
</comment>
<comment type="catalytic activity">
    <reaction evidence="1">
        <text>L-seryl-[protein] + UTP = O-(5'-uridylyl)-L-seryl-[protein] + diphosphate</text>
        <dbReference type="Rhea" id="RHEA:64604"/>
        <dbReference type="Rhea" id="RHEA-COMP:9863"/>
        <dbReference type="Rhea" id="RHEA-COMP:16635"/>
        <dbReference type="ChEBI" id="CHEBI:29999"/>
        <dbReference type="ChEBI" id="CHEBI:33019"/>
        <dbReference type="ChEBI" id="CHEBI:46398"/>
        <dbReference type="ChEBI" id="CHEBI:156051"/>
    </reaction>
</comment>
<comment type="catalytic activity">
    <reaction evidence="1">
        <text>L-tyrosyl-[protein] + UTP = O-(5'-uridylyl)-L-tyrosyl-[protein] + diphosphate</text>
        <dbReference type="Rhea" id="RHEA:83887"/>
        <dbReference type="Rhea" id="RHEA-COMP:10136"/>
        <dbReference type="Rhea" id="RHEA-COMP:20238"/>
        <dbReference type="ChEBI" id="CHEBI:33019"/>
        <dbReference type="ChEBI" id="CHEBI:46398"/>
        <dbReference type="ChEBI" id="CHEBI:46858"/>
        <dbReference type="ChEBI" id="CHEBI:90602"/>
    </reaction>
</comment>
<comment type="cofactor">
    <cofactor evidence="1">
        <name>Mg(2+)</name>
        <dbReference type="ChEBI" id="CHEBI:18420"/>
    </cofactor>
    <cofactor evidence="1">
        <name>Mn(2+)</name>
        <dbReference type="ChEBI" id="CHEBI:29035"/>
    </cofactor>
</comment>
<comment type="similarity">
    <text evidence="1">Belongs to the SELO family.</text>
</comment>
<name>SELO_SPHAL</name>
<protein>
    <recommendedName>
        <fullName evidence="1">Protein nucleotidyltransferase YdiU</fullName>
        <ecNumber evidence="1">2.7.7.-</ecNumber>
    </recommendedName>
    <alternativeName>
        <fullName evidence="1">Protein adenylyltransferase YdiU</fullName>
        <ecNumber evidence="1">2.7.7.108</ecNumber>
    </alternativeName>
    <alternativeName>
        <fullName evidence="1">Protein uridylyltransferase YdiU</fullName>
        <ecNumber evidence="1">2.7.7.-</ecNumber>
    </alternativeName>
</protein>
<reference key="1">
    <citation type="journal article" date="2009" name="Proc. Natl. Acad. Sci. U.S.A.">
        <title>The genomic basis of trophic strategy in marine bacteria.</title>
        <authorList>
            <person name="Lauro F.M."/>
            <person name="McDougald D."/>
            <person name="Thomas T."/>
            <person name="Williams T.J."/>
            <person name="Egan S."/>
            <person name="Rice S."/>
            <person name="DeMaere M.Z."/>
            <person name="Ting L."/>
            <person name="Ertan H."/>
            <person name="Johnson J."/>
            <person name="Ferriera S."/>
            <person name="Lapidus A."/>
            <person name="Anderson I."/>
            <person name="Kyrpides N."/>
            <person name="Munk A.C."/>
            <person name="Detter C."/>
            <person name="Han C.S."/>
            <person name="Brown M.V."/>
            <person name="Robb F.T."/>
            <person name="Kjelleberg S."/>
            <person name="Cavicchioli R."/>
        </authorList>
    </citation>
    <scope>NUCLEOTIDE SEQUENCE [LARGE SCALE GENOMIC DNA]</scope>
    <source>
        <strain>DSM 13593 / LMG 18877 / RB2256</strain>
    </source>
</reference>
<gene>
    <name evidence="1" type="primary">ydiU</name>
    <name evidence="1" type="synonym">selO</name>
    <name type="ordered locus">Sala_1564</name>
</gene>
<evidence type="ECO:0000255" key="1">
    <source>
        <dbReference type="HAMAP-Rule" id="MF_00692"/>
    </source>
</evidence>
<dbReference type="EC" id="2.7.7.-" evidence="1"/>
<dbReference type="EC" id="2.7.7.108" evidence="1"/>
<dbReference type="EMBL" id="CP000356">
    <property type="protein sequence ID" value="ABF53277.1"/>
    <property type="molecule type" value="Genomic_DNA"/>
</dbReference>
<dbReference type="RefSeq" id="WP_011541857.1">
    <property type="nucleotide sequence ID" value="NC_008048.1"/>
</dbReference>
<dbReference type="SMR" id="Q1GSU5"/>
<dbReference type="STRING" id="317655.Sala_1564"/>
<dbReference type="KEGG" id="sal:Sala_1564"/>
<dbReference type="eggNOG" id="COG0397">
    <property type="taxonomic scope" value="Bacteria"/>
</dbReference>
<dbReference type="HOGENOM" id="CLU_010245_4_1_5"/>
<dbReference type="OrthoDB" id="9776281at2"/>
<dbReference type="Proteomes" id="UP000006578">
    <property type="component" value="Chromosome"/>
</dbReference>
<dbReference type="GO" id="GO:0070733">
    <property type="term" value="F:AMPylase activity"/>
    <property type="evidence" value="ECO:0007669"/>
    <property type="project" value="RHEA"/>
</dbReference>
<dbReference type="GO" id="GO:0005524">
    <property type="term" value="F:ATP binding"/>
    <property type="evidence" value="ECO:0007669"/>
    <property type="project" value="UniProtKB-UniRule"/>
</dbReference>
<dbReference type="GO" id="GO:0000287">
    <property type="term" value="F:magnesium ion binding"/>
    <property type="evidence" value="ECO:0007669"/>
    <property type="project" value="UniProtKB-UniRule"/>
</dbReference>
<dbReference type="HAMAP" id="MF_00692">
    <property type="entry name" value="YdiU_SelO"/>
    <property type="match status" value="1"/>
</dbReference>
<dbReference type="InterPro" id="IPR003846">
    <property type="entry name" value="SelO"/>
</dbReference>
<dbReference type="NCBIfam" id="NF000658">
    <property type="entry name" value="PRK00029.1"/>
    <property type="match status" value="1"/>
</dbReference>
<dbReference type="PANTHER" id="PTHR32057">
    <property type="entry name" value="PROTEIN ADENYLYLTRANSFERASE SELO, MITOCHONDRIAL"/>
    <property type="match status" value="1"/>
</dbReference>
<dbReference type="PANTHER" id="PTHR32057:SF14">
    <property type="entry name" value="PROTEIN ADENYLYLTRANSFERASE SELO, MITOCHONDRIAL"/>
    <property type="match status" value="1"/>
</dbReference>
<dbReference type="Pfam" id="PF02696">
    <property type="entry name" value="SelO"/>
    <property type="match status" value="1"/>
</dbReference>
<organism>
    <name type="scientific">Sphingopyxis alaskensis (strain DSM 13593 / LMG 18877 / RB2256)</name>
    <name type="common">Sphingomonas alaskensis</name>
    <dbReference type="NCBI Taxonomy" id="317655"/>
    <lineage>
        <taxon>Bacteria</taxon>
        <taxon>Pseudomonadati</taxon>
        <taxon>Pseudomonadota</taxon>
        <taxon>Alphaproteobacteria</taxon>
        <taxon>Sphingomonadales</taxon>
        <taxon>Sphingomonadaceae</taxon>
        <taxon>Sphingopyxis</taxon>
    </lineage>
</organism>
<accession>Q1GSU5</accession>
<feature type="chain" id="PRO_0000271873" description="Protein nucleotidyltransferase YdiU">
    <location>
        <begin position="1"/>
        <end position="487"/>
    </location>
</feature>
<feature type="active site" description="Proton acceptor" evidence="1">
    <location>
        <position position="248"/>
    </location>
</feature>
<feature type="binding site" evidence="1">
    <location>
        <position position="86"/>
    </location>
    <ligand>
        <name>ATP</name>
        <dbReference type="ChEBI" id="CHEBI:30616"/>
    </ligand>
</feature>
<feature type="binding site" evidence="1">
    <location>
        <position position="88"/>
    </location>
    <ligand>
        <name>ATP</name>
        <dbReference type="ChEBI" id="CHEBI:30616"/>
    </ligand>
</feature>
<feature type="binding site" evidence="1">
    <location>
        <position position="89"/>
    </location>
    <ligand>
        <name>ATP</name>
        <dbReference type="ChEBI" id="CHEBI:30616"/>
    </ligand>
</feature>
<feature type="binding site" evidence="1">
    <location>
        <position position="109"/>
    </location>
    <ligand>
        <name>ATP</name>
        <dbReference type="ChEBI" id="CHEBI:30616"/>
    </ligand>
</feature>
<feature type="binding site" evidence="1">
    <location>
        <position position="121"/>
    </location>
    <ligand>
        <name>ATP</name>
        <dbReference type="ChEBI" id="CHEBI:30616"/>
    </ligand>
</feature>
<feature type="binding site" evidence="1">
    <location>
        <position position="122"/>
    </location>
    <ligand>
        <name>ATP</name>
        <dbReference type="ChEBI" id="CHEBI:30616"/>
    </ligand>
</feature>
<feature type="binding site" evidence="1">
    <location>
        <position position="172"/>
    </location>
    <ligand>
        <name>ATP</name>
        <dbReference type="ChEBI" id="CHEBI:30616"/>
    </ligand>
</feature>
<feature type="binding site" evidence="1">
    <location>
        <position position="179"/>
    </location>
    <ligand>
        <name>ATP</name>
        <dbReference type="ChEBI" id="CHEBI:30616"/>
    </ligand>
</feature>
<feature type="binding site" evidence="1">
    <location>
        <position position="249"/>
    </location>
    <ligand>
        <name>Mg(2+)</name>
        <dbReference type="ChEBI" id="CHEBI:18420"/>
    </ligand>
</feature>
<feature type="binding site" evidence="1">
    <location>
        <position position="258"/>
    </location>
    <ligand>
        <name>ATP</name>
        <dbReference type="ChEBI" id="CHEBI:30616"/>
    </ligand>
</feature>
<feature type="binding site" evidence="1">
    <location>
        <position position="258"/>
    </location>
    <ligand>
        <name>Mg(2+)</name>
        <dbReference type="ChEBI" id="CHEBI:18420"/>
    </ligand>
</feature>